<protein>
    <recommendedName>
        <fullName evidence="4 5">Temporin-1PLa</fullName>
    </recommendedName>
</protein>
<accession>A7WNV7</accession>
<keyword id="KW-0027">Amidation</keyword>
<keyword id="KW-0878">Amphibian defense peptide</keyword>
<keyword id="KW-0044">Antibiotic</keyword>
<keyword id="KW-0929">Antimicrobial</keyword>
<keyword id="KW-0165">Cleavage on pair of basic residues</keyword>
<keyword id="KW-0903">Direct protein sequencing</keyword>
<keyword id="KW-0964">Secreted</keyword>
<keyword id="KW-0732">Signal</keyword>
<reference evidence="7" key="1">
    <citation type="journal article" date="2007" name="Peptides">
        <title>Rapid identification of precursor cDNAs encoding five structural classes of antimicrobial peptides from pickerel frog (Rana palustris) skin secretion by single step 'shotgun' cloning.</title>
        <authorList>
            <person name="Zhou M."/>
            <person name="Wang L."/>
            <person name="Owens D.E."/>
            <person name="Chen T."/>
            <person name="Walker B."/>
            <person name="Shaw C."/>
        </authorList>
    </citation>
    <scope>NUCLEOTIDE SEQUENCE [MRNA]</scope>
    <source>
        <tissue evidence="3">Skin secretion</tissue>
    </source>
</reference>
<reference evidence="6" key="2">
    <citation type="journal article" date="2000" name="Biochim. Biophys. Acta">
        <title>Multiple antimicrobial peptides and peptides related to bradykinin and neuromedin N isolated from skin secretions of the pickerel frog, Rana palustris.</title>
        <authorList>
            <person name="Basir Y.J."/>
            <person name="Knoop F.C."/>
            <person name="Dulka J."/>
            <person name="Conlon J.M."/>
        </authorList>
    </citation>
    <scope>PROTEIN SEQUENCE OF 48-60</scope>
    <scope>FUNCTION</scope>
    <scope>SUBCELLULAR LOCATION</scope>
    <scope>TISSUE SPECIFICITY</scope>
    <scope>MASS SPECTROMETRY</scope>
    <scope>AMIDATION AT ILE-60</scope>
    <source>
        <tissue evidence="2">Skin secretion</tissue>
    </source>
</reference>
<feature type="signal peptide" evidence="1">
    <location>
        <begin position="1"/>
        <end position="22"/>
    </location>
</feature>
<feature type="propeptide" id="PRO_5000271602" evidence="1">
    <location>
        <begin position="23"/>
        <end position="45"/>
    </location>
</feature>
<feature type="peptide" id="PRO_5000271603" description="Temporin-1PLa" evidence="7">
    <location>
        <begin position="48"/>
        <end position="60"/>
    </location>
</feature>
<feature type="modified residue" description="Isoleucine amide" evidence="2">
    <location>
        <position position="60"/>
    </location>
</feature>
<proteinExistence type="evidence at protein level"/>
<dbReference type="EMBL" id="AM745091">
    <property type="protein sequence ID" value="CAN87013.1"/>
    <property type="molecule type" value="mRNA"/>
</dbReference>
<dbReference type="GO" id="GO:0005576">
    <property type="term" value="C:extracellular region"/>
    <property type="evidence" value="ECO:0007669"/>
    <property type="project" value="UniProtKB-SubCell"/>
</dbReference>
<dbReference type="GO" id="GO:0042742">
    <property type="term" value="P:defense response to bacterium"/>
    <property type="evidence" value="ECO:0007669"/>
    <property type="project" value="UniProtKB-KW"/>
</dbReference>
<dbReference type="InterPro" id="IPR004275">
    <property type="entry name" value="Frog_antimicrobial_propeptide"/>
</dbReference>
<dbReference type="Pfam" id="PF03032">
    <property type="entry name" value="FSAP_sig_propep"/>
    <property type="match status" value="1"/>
</dbReference>
<sequence>MFTSKKSLLLLFFLGTINLSLCEEERDADEEERRDDPDEMNVEVEKRFLPLVGKILSGLIGK</sequence>
<evidence type="ECO:0000255" key="1"/>
<evidence type="ECO:0000269" key="2">
    <source>
    </source>
</evidence>
<evidence type="ECO:0000269" key="3">
    <source>
    </source>
</evidence>
<evidence type="ECO:0000303" key="4">
    <source>
    </source>
</evidence>
<evidence type="ECO:0000303" key="5">
    <source>
    </source>
</evidence>
<evidence type="ECO:0000305" key="6"/>
<evidence type="ECO:0000312" key="7">
    <source>
        <dbReference type="EMBL" id="CAN87013.1"/>
    </source>
</evidence>
<comment type="function">
    <text evidence="2">Antimicrobial activity against the Gram-positive bacterium S.aureus.</text>
</comment>
<comment type="subcellular location">
    <subcellularLocation>
        <location evidence="2">Secreted</location>
    </subcellularLocation>
</comment>
<comment type="tissue specificity">
    <text evidence="2">Expressed by the skin glands.</text>
</comment>
<comment type="mass spectrometry"/>
<comment type="similarity">
    <text evidence="1">Belongs to the frog skin active peptide (FSAP) family. Temporin subfamily.</text>
</comment>
<organism>
    <name type="scientific">Lithobates palustris</name>
    <name type="common">Pickerel frog</name>
    <name type="synonym">Rana palustris</name>
    <dbReference type="NCBI Taxonomy" id="298395"/>
    <lineage>
        <taxon>Eukaryota</taxon>
        <taxon>Metazoa</taxon>
        <taxon>Chordata</taxon>
        <taxon>Craniata</taxon>
        <taxon>Vertebrata</taxon>
        <taxon>Euteleostomi</taxon>
        <taxon>Amphibia</taxon>
        <taxon>Batrachia</taxon>
        <taxon>Anura</taxon>
        <taxon>Neobatrachia</taxon>
        <taxon>Ranoidea</taxon>
        <taxon>Ranidae</taxon>
        <taxon>Lithobates</taxon>
    </lineage>
</organism>
<name>TP1A_LITPA</name>